<sequence length="70" mass="7566">MLILTRRVGETLMIGDSVTVTVLGVKGNQVRIGITAPKDVAVHREEIYQRIQRGDEPVASGAHHGDDSSN</sequence>
<gene>
    <name evidence="1" type="primary">csrA</name>
    <name type="ordered locus">XOO2790</name>
</gene>
<feature type="chain" id="PRO_1000023440" description="Translational regulator CsrA">
    <location>
        <begin position="1"/>
        <end position="70"/>
    </location>
</feature>
<feature type="region of interest" description="Disordered" evidence="2">
    <location>
        <begin position="51"/>
        <end position="70"/>
    </location>
</feature>
<protein>
    <recommendedName>
        <fullName evidence="1">Translational regulator CsrA</fullName>
    </recommendedName>
    <alternativeName>
        <fullName evidence="1">Carbon storage regulator</fullName>
    </alternativeName>
</protein>
<accession>Q2P1N2</accession>
<proteinExistence type="inferred from homology"/>
<dbReference type="EMBL" id="AP008229">
    <property type="protein sequence ID" value="BAE69545.1"/>
    <property type="molecule type" value="Genomic_DNA"/>
</dbReference>
<dbReference type="RefSeq" id="WP_003481884.1">
    <property type="nucleotide sequence ID" value="NC_007705.1"/>
</dbReference>
<dbReference type="SMR" id="Q2P1N2"/>
<dbReference type="GeneID" id="97510119"/>
<dbReference type="KEGG" id="xom:XOO2790"/>
<dbReference type="HOGENOM" id="CLU_164837_2_1_6"/>
<dbReference type="GO" id="GO:0005829">
    <property type="term" value="C:cytosol"/>
    <property type="evidence" value="ECO:0007669"/>
    <property type="project" value="TreeGrafter"/>
</dbReference>
<dbReference type="GO" id="GO:0048027">
    <property type="term" value="F:mRNA 5'-UTR binding"/>
    <property type="evidence" value="ECO:0007669"/>
    <property type="project" value="UniProtKB-UniRule"/>
</dbReference>
<dbReference type="GO" id="GO:0006402">
    <property type="term" value="P:mRNA catabolic process"/>
    <property type="evidence" value="ECO:0007669"/>
    <property type="project" value="InterPro"/>
</dbReference>
<dbReference type="GO" id="GO:0045947">
    <property type="term" value="P:negative regulation of translational initiation"/>
    <property type="evidence" value="ECO:0007669"/>
    <property type="project" value="UniProtKB-UniRule"/>
</dbReference>
<dbReference type="GO" id="GO:0045948">
    <property type="term" value="P:positive regulation of translational initiation"/>
    <property type="evidence" value="ECO:0007669"/>
    <property type="project" value="UniProtKB-UniRule"/>
</dbReference>
<dbReference type="GO" id="GO:0006109">
    <property type="term" value="P:regulation of carbohydrate metabolic process"/>
    <property type="evidence" value="ECO:0007669"/>
    <property type="project" value="UniProtKB-UniRule"/>
</dbReference>
<dbReference type="FunFam" id="2.60.40.4380:FF:000001">
    <property type="entry name" value="Translational regulator CsrA"/>
    <property type="match status" value="1"/>
</dbReference>
<dbReference type="Gene3D" id="2.60.40.4380">
    <property type="entry name" value="Translational regulator CsrA"/>
    <property type="match status" value="1"/>
</dbReference>
<dbReference type="HAMAP" id="MF_00167">
    <property type="entry name" value="CsrA"/>
    <property type="match status" value="1"/>
</dbReference>
<dbReference type="InterPro" id="IPR003751">
    <property type="entry name" value="CsrA"/>
</dbReference>
<dbReference type="InterPro" id="IPR036107">
    <property type="entry name" value="CsrA_sf"/>
</dbReference>
<dbReference type="NCBIfam" id="TIGR00202">
    <property type="entry name" value="csrA"/>
    <property type="match status" value="1"/>
</dbReference>
<dbReference type="NCBIfam" id="NF002469">
    <property type="entry name" value="PRK01712.1"/>
    <property type="match status" value="1"/>
</dbReference>
<dbReference type="PANTHER" id="PTHR34984">
    <property type="entry name" value="CARBON STORAGE REGULATOR"/>
    <property type="match status" value="1"/>
</dbReference>
<dbReference type="PANTHER" id="PTHR34984:SF1">
    <property type="entry name" value="CARBON STORAGE REGULATOR"/>
    <property type="match status" value="1"/>
</dbReference>
<dbReference type="Pfam" id="PF02599">
    <property type="entry name" value="CsrA"/>
    <property type="match status" value="1"/>
</dbReference>
<dbReference type="SUPFAM" id="SSF117130">
    <property type="entry name" value="CsrA-like"/>
    <property type="match status" value="1"/>
</dbReference>
<keyword id="KW-0010">Activator</keyword>
<keyword id="KW-0963">Cytoplasm</keyword>
<keyword id="KW-0678">Repressor</keyword>
<keyword id="KW-0694">RNA-binding</keyword>
<keyword id="KW-0810">Translation regulation</keyword>
<reference key="1">
    <citation type="journal article" date="2005" name="Jpn. Agric. Res. Q.">
        <title>Genome sequence of Xanthomonas oryzae pv. oryzae suggests contribution of large numbers of effector genes and insertion sequences to its race diversity.</title>
        <authorList>
            <person name="Ochiai H."/>
            <person name="Inoue Y."/>
            <person name="Takeya M."/>
            <person name="Sasaki A."/>
            <person name="Kaku H."/>
        </authorList>
    </citation>
    <scope>NUCLEOTIDE SEQUENCE [LARGE SCALE GENOMIC DNA]</scope>
    <source>
        <strain>MAFF 311018</strain>
    </source>
</reference>
<evidence type="ECO:0000255" key="1">
    <source>
        <dbReference type="HAMAP-Rule" id="MF_00167"/>
    </source>
</evidence>
<evidence type="ECO:0000256" key="2">
    <source>
        <dbReference type="SAM" id="MobiDB-lite"/>
    </source>
</evidence>
<comment type="function">
    <text evidence="1">A key translational regulator that binds mRNA to regulate translation initiation and/or mRNA stability. Mediates global changes in gene expression, shifting from rapid growth to stress survival by linking envelope stress, the stringent response and the catabolite repression systems. Usually binds in the 5'-UTR; binding at or near the Shine-Dalgarno sequence prevents ribosome-binding, repressing translation, binding elsewhere in the 5'-UTR can activate translation and/or stabilize the mRNA. Its function is antagonized by small RNA(s).</text>
</comment>
<comment type="subunit">
    <text evidence="1">Homodimer; the beta-strands of each monomer intercalate to form a hydrophobic core, while the alpha-helices form wings that extend away from the core.</text>
</comment>
<comment type="subcellular location">
    <subcellularLocation>
        <location evidence="1">Cytoplasm</location>
    </subcellularLocation>
</comment>
<comment type="similarity">
    <text evidence="1">Belongs to the CsrA/RsmA family.</text>
</comment>
<organism>
    <name type="scientific">Xanthomonas oryzae pv. oryzae (strain MAFF 311018)</name>
    <dbReference type="NCBI Taxonomy" id="342109"/>
    <lineage>
        <taxon>Bacteria</taxon>
        <taxon>Pseudomonadati</taxon>
        <taxon>Pseudomonadota</taxon>
        <taxon>Gammaproteobacteria</taxon>
        <taxon>Lysobacterales</taxon>
        <taxon>Lysobacteraceae</taxon>
        <taxon>Xanthomonas</taxon>
    </lineage>
</organism>
<name>CSRA_XANOM</name>